<sequence>MDYLDLGPYSSASGTVRLPGSKSISNRVLLLAALAEGETTITNLLDSDDTRVMLDALGKLGVRLTRDADTCVVAGTRGAFTARTADLFLGNAGTAVRPLTAALAVNGGDYRVHGVPRMHERPIGDLVDGLRQIGAQIDYEQNEGFPPLRIKPAAITVDAPIRVRGDVSSQFLTALLMTLPLVKAKDGKIVVEVDGELISKPYIDITIRLMERFGVTVERDGWQRFVVPAGVRYRSPGRIMVEGDASSASYFLAAGALGGGPLRVEGVGRASIQGDVGFANALMQMGANVSMGDDWIEVRGIGHDHGKLDPIDMDFNLIPDAAMTIAVAALFASGTSTLRNIASWRVKETDRIAAMATELRKLGAVVEEGPDYLVVTPPQRLTPNATIDTYDDHRMAMCFSLVSLGGVPVRINDPKCVGKTFPDYFDRFAALAKA</sequence>
<reference key="1">
    <citation type="submission" date="2007-03" db="EMBL/GenBank/DDBJ databases">
        <title>Complete sequence of chromosome 1 of Burkholderia vietnamiensis G4.</title>
        <authorList>
            <consortium name="US DOE Joint Genome Institute"/>
            <person name="Copeland A."/>
            <person name="Lucas S."/>
            <person name="Lapidus A."/>
            <person name="Barry K."/>
            <person name="Detter J.C."/>
            <person name="Glavina del Rio T."/>
            <person name="Hammon N."/>
            <person name="Israni S."/>
            <person name="Dalin E."/>
            <person name="Tice H."/>
            <person name="Pitluck S."/>
            <person name="Chain P."/>
            <person name="Malfatti S."/>
            <person name="Shin M."/>
            <person name="Vergez L."/>
            <person name="Schmutz J."/>
            <person name="Larimer F."/>
            <person name="Land M."/>
            <person name="Hauser L."/>
            <person name="Kyrpides N."/>
            <person name="Tiedje J."/>
            <person name="Richardson P."/>
        </authorList>
    </citation>
    <scope>NUCLEOTIDE SEQUENCE [LARGE SCALE GENOMIC DNA]</scope>
    <source>
        <strain>G4 / LMG 22486</strain>
    </source>
</reference>
<proteinExistence type="inferred from homology"/>
<protein>
    <recommendedName>
        <fullName evidence="1">3-phosphoshikimate 1-carboxyvinyltransferase</fullName>
        <ecNumber evidence="1">2.5.1.19</ecNumber>
    </recommendedName>
    <alternativeName>
        <fullName evidence="1">5-enolpyruvylshikimate-3-phosphate synthase</fullName>
        <shortName evidence="1">EPSP synthase</shortName>
        <shortName evidence="1">EPSPS</shortName>
    </alternativeName>
</protein>
<name>AROA_BURVG</name>
<accession>A4JCH4</accession>
<comment type="function">
    <text evidence="1">Catalyzes the transfer of the enolpyruvyl moiety of phosphoenolpyruvate (PEP) to the 5-hydroxyl of shikimate-3-phosphate (S3P) to produce enolpyruvyl shikimate-3-phosphate and inorganic phosphate.</text>
</comment>
<comment type="catalytic activity">
    <reaction evidence="1">
        <text>3-phosphoshikimate + phosphoenolpyruvate = 5-O-(1-carboxyvinyl)-3-phosphoshikimate + phosphate</text>
        <dbReference type="Rhea" id="RHEA:21256"/>
        <dbReference type="ChEBI" id="CHEBI:43474"/>
        <dbReference type="ChEBI" id="CHEBI:57701"/>
        <dbReference type="ChEBI" id="CHEBI:58702"/>
        <dbReference type="ChEBI" id="CHEBI:145989"/>
        <dbReference type="EC" id="2.5.1.19"/>
    </reaction>
    <physiologicalReaction direction="left-to-right" evidence="1">
        <dbReference type="Rhea" id="RHEA:21257"/>
    </physiologicalReaction>
</comment>
<comment type="pathway">
    <text evidence="1">Metabolic intermediate biosynthesis; chorismate biosynthesis; chorismate from D-erythrose 4-phosphate and phosphoenolpyruvate: step 6/7.</text>
</comment>
<comment type="subunit">
    <text evidence="1">Monomer.</text>
</comment>
<comment type="subcellular location">
    <subcellularLocation>
        <location evidence="1">Cytoplasm</location>
    </subcellularLocation>
</comment>
<comment type="similarity">
    <text evidence="1">Belongs to the EPSP synthase family.</text>
</comment>
<dbReference type="EC" id="2.5.1.19" evidence="1"/>
<dbReference type="EMBL" id="CP000614">
    <property type="protein sequence ID" value="ABO53977.1"/>
    <property type="molecule type" value="Genomic_DNA"/>
</dbReference>
<dbReference type="SMR" id="A4JCH4"/>
<dbReference type="KEGG" id="bvi:Bcep1808_0966"/>
<dbReference type="eggNOG" id="COG0128">
    <property type="taxonomic scope" value="Bacteria"/>
</dbReference>
<dbReference type="HOGENOM" id="CLU_024321_0_0_4"/>
<dbReference type="UniPathway" id="UPA00053">
    <property type="reaction ID" value="UER00089"/>
</dbReference>
<dbReference type="Proteomes" id="UP000002287">
    <property type="component" value="Chromosome 1"/>
</dbReference>
<dbReference type="GO" id="GO:0005737">
    <property type="term" value="C:cytoplasm"/>
    <property type="evidence" value="ECO:0007669"/>
    <property type="project" value="UniProtKB-SubCell"/>
</dbReference>
<dbReference type="GO" id="GO:0003866">
    <property type="term" value="F:3-phosphoshikimate 1-carboxyvinyltransferase activity"/>
    <property type="evidence" value="ECO:0007669"/>
    <property type="project" value="UniProtKB-UniRule"/>
</dbReference>
<dbReference type="GO" id="GO:0008652">
    <property type="term" value="P:amino acid biosynthetic process"/>
    <property type="evidence" value="ECO:0007669"/>
    <property type="project" value="UniProtKB-KW"/>
</dbReference>
<dbReference type="GO" id="GO:0009073">
    <property type="term" value="P:aromatic amino acid family biosynthetic process"/>
    <property type="evidence" value="ECO:0007669"/>
    <property type="project" value="UniProtKB-KW"/>
</dbReference>
<dbReference type="GO" id="GO:0009423">
    <property type="term" value="P:chorismate biosynthetic process"/>
    <property type="evidence" value="ECO:0007669"/>
    <property type="project" value="UniProtKB-UniRule"/>
</dbReference>
<dbReference type="CDD" id="cd01556">
    <property type="entry name" value="EPSP_synthase"/>
    <property type="match status" value="1"/>
</dbReference>
<dbReference type="FunFam" id="3.65.10.10:FF:000003">
    <property type="entry name" value="3-phosphoshikimate 1-carboxyvinyltransferase"/>
    <property type="match status" value="1"/>
</dbReference>
<dbReference type="FunFam" id="3.65.10.10:FF:000004">
    <property type="entry name" value="3-phosphoshikimate 1-carboxyvinyltransferase"/>
    <property type="match status" value="1"/>
</dbReference>
<dbReference type="Gene3D" id="3.65.10.10">
    <property type="entry name" value="Enolpyruvate transferase domain"/>
    <property type="match status" value="2"/>
</dbReference>
<dbReference type="HAMAP" id="MF_00210">
    <property type="entry name" value="EPSP_synth"/>
    <property type="match status" value="1"/>
</dbReference>
<dbReference type="InterPro" id="IPR001986">
    <property type="entry name" value="Enolpyruvate_Tfrase_dom"/>
</dbReference>
<dbReference type="InterPro" id="IPR036968">
    <property type="entry name" value="Enolpyruvate_Tfrase_sf"/>
</dbReference>
<dbReference type="InterPro" id="IPR006264">
    <property type="entry name" value="EPSP_synthase"/>
</dbReference>
<dbReference type="InterPro" id="IPR023193">
    <property type="entry name" value="EPSP_synthase_CS"/>
</dbReference>
<dbReference type="InterPro" id="IPR013792">
    <property type="entry name" value="RNA3'P_cycl/enolpyr_Trfase_a/b"/>
</dbReference>
<dbReference type="NCBIfam" id="TIGR01356">
    <property type="entry name" value="aroA"/>
    <property type="match status" value="1"/>
</dbReference>
<dbReference type="PANTHER" id="PTHR21090">
    <property type="entry name" value="AROM/DEHYDROQUINATE SYNTHASE"/>
    <property type="match status" value="1"/>
</dbReference>
<dbReference type="PANTHER" id="PTHR21090:SF5">
    <property type="entry name" value="PENTAFUNCTIONAL AROM POLYPEPTIDE"/>
    <property type="match status" value="1"/>
</dbReference>
<dbReference type="Pfam" id="PF00275">
    <property type="entry name" value="EPSP_synthase"/>
    <property type="match status" value="1"/>
</dbReference>
<dbReference type="PIRSF" id="PIRSF000505">
    <property type="entry name" value="EPSPS"/>
    <property type="match status" value="1"/>
</dbReference>
<dbReference type="SUPFAM" id="SSF55205">
    <property type="entry name" value="EPT/RTPC-like"/>
    <property type="match status" value="1"/>
</dbReference>
<dbReference type="PROSITE" id="PS00104">
    <property type="entry name" value="EPSP_SYNTHASE_1"/>
    <property type="match status" value="1"/>
</dbReference>
<dbReference type="PROSITE" id="PS00885">
    <property type="entry name" value="EPSP_SYNTHASE_2"/>
    <property type="match status" value="1"/>
</dbReference>
<gene>
    <name evidence="1" type="primary">aroA</name>
    <name type="ordered locus">Bcep1808_0966</name>
</gene>
<evidence type="ECO:0000255" key="1">
    <source>
        <dbReference type="HAMAP-Rule" id="MF_00210"/>
    </source>
</evidence>
<feature type="chain" id="PRO_0000325337" description="3-phosphoshikimate 1-carboxyvinyltransferase">
    <location>
        <begin position="1"/>
        <end position="434"/>
    </location>
</feature>
<feature type="active site" description="Proton acceptor" evidence="1">
    <location>
        <position position="320"/>
    </location>
</feature>
<feature type="binding site" evidence="1">
    <location>
        <position position="22"/>
    </location>
    <ligand>
        <name>3-phosphoshikimate</name>
        <dbReference type="ChEBI" id="CHEBI:145989"/>
    </ligand>
</feature>
<feature type="binding site" evidence="1">
    <location>
        <position position="22"/>
    </location>
    <ligand>
        <name>phosphoenolpyruvate</name>
        <dbReference type="ChEBI" id="CHEBI:58702"/>
    </ligand>
</feature>
<feature type="binding site" evidence="1">
    <location>
        <position position="23"/>
    </location>
    <ligand>
        <name>3-phosphoshikimate</name>
        <dbReference type="ChEBI" id="CHEBI:145989"/>
    </ligand>
</feature>
<feature type="binding site" evidence="1">
    <location>
        <position position="27"/>
    </location>
    <ligand>
        <name>3-phosphoshikimate</name>
        <dbReference type="ChEBI" id="CHEBI:145989"/>
    </ligand>
</feature>
<feature type="binding site" evidence="1">
    <location>
        <position position="93"/>
    </location>
    <ligand>
        <name>phosphoenolpyruvate</name>
        <dbReference type="ChEBI" id="CHEBI:58702"/>
    </ligand>
</feature>
<feature type="binding site" evidence="1">
    <location>
        <position position="121"/>
    </location>
    <ligand>
        <name>phosphoenolpyruvate</name>
        <dbReference type="ChEBI" id="CHEBI:58702"/>
    </ligand>
</feature>
<feature type="binding site" evidence="1">
    <location>
        <position position="168"/>
    </location>
    <ligand>
        <name>3-phosphoshikimate</name>
        <dbReference type="ChEBI" id="CHEBI:145989"/>
    </ligand>
</feature>
<feature type="binding site" evidence="1">
    <location>
        <position position="169"/>
    </location>
    <ligand>
        <name>3-phosphoshikimate</name>
        <dbReference type="ChEBI" id="CHEBI:145989"/>
    </ligand>
</feature>
<feature type="binding site" evidence="1">
    <location>
        <position position="170"/>
    </location>
    <ligand>
        <name>3-phosphoshikimate</name>
        <dbReference type="ChEBI" id="CHEBI:145989"/>
    </ligand>
</feature>
<feature type="binding site" evidence="1">
    <location>
        <position position="170"/>
    </location>
    <ligand>
        <name>phosphoenolpyruvate</name>
        <dbReference type="ChEBI" id="CHEBI:58702"/>
    </ligand>
</feature>
<feature type="binding site" evidence="1">
    <location>
        <position position="199"/>
    </location>
    <ligand>
        <name>3-phosphoshikimate</name>
        <dbReference type="ChEBI" id="CHEBI:145989"/>
    </ligand>
</feature>
<feature type="binding site" evidence="1">
    <location>
        <position position="320"/>
    </location>
    <ligand>
        <name>3-phosphoshikimate</name>
        <dbReference type="ChEBI" id="CHEBI:145989"/>
    </ligand>
</feature>
<feature type="binding site" evidence="1">
    <location>
        <position position="347"/>
    </location>
    <ligand>
        <name>3-phosphoshikimate</name>
        <dbReference type="ChEBI" id="CHEBI:145989"/>
    </ligand>
</feature>
<feature type="binding site" evidence="1">
    <location>
        <position position="351"/>
    </location>
    <ligand>
        <name>phosphoenolpyruvate</name>
        <dbReference type="ChEBI" id="CHEBI:58702"/>
    </ligand>
</feature>
<feature type="binding site" evidence="1">
    <location>
        <position position="394"/>
    </location>
    <ligand>
        <name>phosphoenolpyruvate</name>
        <dbReference type="ChEBI" id="CHEBI:58702"/>
    </ligand>
</feature>
<feature type="binding site" evidence="1">
    <location>
        <position position="419"/>
    </location>
    <ligand>
        <name>phosphoenolpyruvate</name>
        <dbReference type="ChEBI" id="CHEBI:58702"/>
    </ligand>
</feature>
<keyword id="KW-0028">Amino-acid biosynthesis</keyword>
<keyword id="KW-0057">Aromatic amino acid biosynthesis</keyword>
<keyword id="KW-0963">Cytoplasm</keyword>
<keyword id="KW-0808">Transferase</keyword>
<organism>
    <name type="scientific">Burkholderia vietnamiensis (strain G4 / LMG 22486)</name>
    <name type="common">Burkholderia cepacia (strain R1808)</name>
    <dbReference type="NCBI Taxonomy" id="269482"/>
    <lineage>
        <taxon>Bacteria</taxon>
        <taxon>Pseudomonadati</taxon>
        <taxon>Pseudomonadota</taxon>
        <taxon>Betaproteobacteria</taxon>
        <taxon>Burkholderiales</taxon>
        <taxon>Burkholderiaceae</taxon>
        <taxon>Burkholderia</taxon>
        <taxon>Burkholderia cepacia complex</taxon>
    </lineage>
</organism>